<gene>
    <name evidence="1" type="primary">xseB</name>
    <name type="ordered locus">Bd0198</name>
</gene>
<organism>
    <name type="scientific">Bdellovibrio bacteriovorus (strain ATCC 15356 / DSM 50701 / NCIMB 9529 / HD100)</name>
    <dbReference type="NCBI Taxonomy" id="264462"/>
    <lineage>
        <taxon>Bacteria</taxon>
        <taxon>Pseudomonadati</taxon>
        <taxon>Bdellovibrionota</taxon>
        <taxon>Bdellovibrionia</taxon>
        <taxon>Bdellovibrionales</taxon>
        <taxon>Pseudobdellovibrionaceae</taxon>
        <taxon>Bdellovibrio</taxon>
    </lineage>
</organism>
<feature type="chain" id="PRO_0000206924" description="Exodeoxyribonuclease 7 small subunit">
    <location>
        <begin position="1"/>
        <end position="74"/>
    </location>
</feature>
<proteinExistence type="inferred from homology"/>
<protein>
    <recommendedName>
        <fullName evidence="1">Exodeoxyribonuclease 7 small subunit</fullName>
        <ecNumber evidence="1">3.1.11.6</ecNumber>
    </recommendedName>
    <alternativeName>
        <fullName evidence="1">Exodeoxyribonuclease VII small subunit</fullName>
        <shortName evidence="1">Exonuclease VII small subunit</shortName>
    </alternativeName>
</protein>
<evidence type="ECO:0000255" key="1">
    <source>
        <dbReference type="HAMAP-Rule" id="MF_00337"/>
    </source>
</evidence>
<name>EX7S_BDEBA</name>
<reference key="1">
    <citation type="journal article" date="2004" name="Science">
        <title>A predator unmasked: life cycle of Bdellovibrio bacteriovorus from a genomic perspective.</title>
        <authorList>
            <person name="Rendulic S."/>
            <person name="Jagtap P."/>
            <person name="Rosinus A."/>
            <person name="Eppinger M."/>
            <person name="Baar C."/>
            <person name="Lanz C."/>
            <person name="Keller H."/>
            <person name="Lambert C."/>
            <person name="Evans K.J."/>
            <person name="Goesmann A."/>
            <person name="Meyer F."/>
            <person name="Sockett R.E."/>
            <person name="Schuster S.C."/>
        </authorList>
    </citation>
    <scope>NUCLEOTIDE SEQUENCE [LARGE SCALE GENOMIC DNA]</scope>
    <source>
        <strain>ATCC 15356 / DSM 50701 / NCIMB 9529 / HD100</strain>
    </source>
</reference>
<sequence>MDFEKKLGRLEEIVQKMEKGDLALEESLKLFEEGVKLSRECHQRLNEAESKVKLLMSVGADGQPVTTDFTSEEN</sequence>
<keyword id="KW-0963">Cytoplasm</keyword>
<keyword id="KW-0269">Exonuclease</keyword>
<keyword id="KW-0378">Hydrolase</keyword>
<keyword id="KW-0540">Nuclease</keyword>
<keyword id="KW-1185">Reference proteome</keyword>
<comment type="function">
    <text evidence="1">Bidirectionally degrades single-stranded DNA into large acid-insoluble oligonucleotides, which are then degraded further into small acid-soluble oligonucleotides.</text>
</comment>
<comment type="catalytic activity">
    <reaction evidence="1">
        <text>Exonucleolytic cleavage in either 5'- to 3'- or 3'- to 5'-direction to yield nucleoside 5'-phosphates.</text>
        <dbReference type="EC" id="3.1.11.6"/>
    </reaction>
</comment>
<comment type="subunit">
    <text evidence="1">Heterooligomer composed of large and small subunits.</text>
</comment>
<comment type="subcellular location">
    <subcellularLocation>
        <location evidence="1">Cytoplasm</location>
    </subcellularLocation>
</comment>
<comment type="similarity">
    <text evidence="1">Belongs to the XseB family.</text>
</comment>
<accession>Q6MR96</accession>
<dbReference type="EC" id="3.1.11.6" evidence="1"/>
<dbReference type="EMBL" id="BX842646">
    <property type="protein sequence ID" value="CAE77862.1"/>
    <property type="molecule type" value="Genomic_DNA"/>
</dbReference>
<dbReference type="RefSeq" id="WP_011162803.1">
    <property type="nucleotide sequence ID" value="NC_005363.1"/>
</dbReference>
<dbReference type="SMR" id="Q6MR96"/>
<dbReference type="STRING" id="264462.Bd0198"/>
<dbReference type="GeneID" id="93011338"/>
<dbReference type="KEGG" id="bba:Bd0198"/>
<dbReference type="eggNOG" id="COG1722">
    <property type="taxonomic scope" value="Bacteria"/>
</dbReference>
<dbReference type="HOGENOM" id="CLU_145918_3_4_7"/>
<dbReference type="Proteomes" id="UP000008080">
    <property type="component" value="Chromosome"/>
</dbReference>
<dbReference type="GO" id="GO:0005829">
    <property type="term" value="C:cytosol"/>
    <property type="evidence" value="ECO:0007669"/>
    <property type="project" value="TreeGrafter"/>
</dbReference>
<dbReference type="GO" id="GO:0009318">
    <property type="term" value="C:exodeoxyribonuclease VII complex"/>
    <property type="evidence" value="ECO:0007669"/>
    <property type="project" value="InterPro"/>
</dbReference>
<dbReference type="GO" id="GO:0008855">
    <property type="term" value="F:exodeoxyribonuclease VII activity"/>
    <property type="evidence" value="ECO:0007669"/>
    <property type="project" value="UniProtKB-UniRule"/>
</dbReference>
<dbReference type="GO" id="GO:0006308">
    <property type="term" value="P:DNA catabolic process"/>
    <property type="evidence" value="ECO:0007669"/>
    <property type="project" value="UniProtKB-UniRule"/>
</dbReference>
<dbReference type="Gene3D" id="1.10.287.1040">
    <property type="entry name" value="Exonuclease VII, small subunit"/>
    <property type="match status" value="1"/>
</dbReference>
<dbReference type="HAMAP" id="MF_00337">
    <property type="entry name" value="Exonuc_7_S"/>
    <property type="match status" value="1"/>
</dbReference>
<dbReference type="InterPro" id="IPR003761">
    <property type="entry name" value="Exonuc_VII_S"/>
</dbReference>
<dbReference type="InterPro" id="IPR037004">
    <property type="entry name" value="Exonuc_VII_ssu_sf"/>
</dbReference>
<dbReference type="NCBIfam" id="NF002140">
    <property type="entry name" value="PRK00977.1-4"/>
    <property type="match status" value="1"/>
</dbReference>
<dbReference type="NCBIfam" id="TIGR01280">
    <property type="entry name" value="xseB"/>
    <property type="match status" value="1"/>
</dbReference>
<dbReference type="PANTHER" id="PTHR34137">
    <property type="entry name" value="EXODEOXYRIBONUCLEASE 7 SMALL SUBUNIT"/>
    <property type="match status" value="1"/>
</dbReference>
<dbReference type="PANTHER" id="PTHR34137:SF1">
    <property type="entry name" value="EXODEOXYRIBONUCLEASE 7 SMALL SUBUNIT"/>
    <property type="match status" value="1"/>
</dbReference>
<dbReference type="Pfam" id="PF02609">
    <property type="entry name" value="Exonuc_VII_S"/>
    <property type="match status" value="1"/>
</dbReference>
<dbReference type="SUPFAM" id="SSF116842">
    <property type="entry name" value="XseB-like"/>
    <property type="match status" value="1"/>
</dbReference>